<organism>
    <name type="scientific">Xenopus tropicalis</name>
    <name type="common">Western clawed frog</name>
    <name type="synonym">Silurana tropicalis</name>
    <dbReference type="NCBI Taxonomy" id="8364"/>
    <lineage>
        <taxon>Eukaryota</taxon>
        <taxon>Metazoa</taxon>
        <taxon>Chordata</taxon>
        <taxon>Craniata</taxon>
        <taxon>Vertebrata</taxon>
        <taxon>Euteleostomi</taxon>
        <taxon>Amphibia</taxon>
        <taxon>Batrachia</taxon>
        <taxon>Anura</taxon>
        <taxon>Pipoidea</taxon>
        <taxon>Pipidae</taxon>
        <taxon>Xenopodinae</taxon>
        <taxon>Xenopus</taxon>
        <taxon>Silurana</taxon>
    </lineage>
</organism>
<name>MFHA1_XENTR</name>
<sequence length="997" mass="113096">MAGNDTCNNSCDVKTARLWRDAALRSRKLRSSLRQLTLSCVDKRKLILPADLGDVEVLNLGNNSLEEVPDGLQSLSAGNLHVLILRRNKFLNVPTAVYHLGRLTELDISYNRLSCLTEAVGLLGKLKKLCLSHNQLRTLPRQLGMLVDLEELDVSFNQITHLPDTMQGLPSLRTLDLDHNELCSFPQQLFHVPALEELDFSGNKMLGSLPEGIRSMQSLKILWLSSTSLCLLPDSICELVNLESLMLDNNNLHTLPEGFGALQKLKMLNVSSNAFQDFPVPLLQLVDLEELYMSRNRLVVLPEVISCMTKLVTLWLDNNRIRYLPDSIVELSFLEELVLQGNQIAILPDDFGKLSKVNIWKIKDNPLIQPPYEVCMKGISYIAAYQKELAHSQPAVKPRLKLVLLGLKDAGKTLLRQCLTDEQNTSTLVQGYKGIEITNWTADAERGLAFIVYDLAGDQSYDIIKPFFFSPGALYILVVNLKSYVCKHFYTHVGYFIHLITSKVPHAVVCIVGTHIDLCNEKELEEKCLDIHHQIAVQEKRDSETLQTLIQTVDKALSQDFDFRASNPHSAFYGVSDKNLRRKKTHFQYLMNSRLQILSPVLCVSCLDFSNIKRLREKLLSVAEHREIFPNLHRVLPKSWQMLEELHFKPQELWLTWWDSARLGLQAGLTEDRMQSALSFLHESGKLLYFEDNQTLKEYVFHNLTKLIDILNVFFQRDASVLFAKLTSDATADETKVTQFHHYVEGFLLHGLLPTHIIRSLLKPHIKTHQDLQLILELLEKMGLCYCINKPKNKLLNGATVWYKFPCYVKNEAPHAEAWINGTNISEPCLAVEQLQIEYSFPFIFPPGLFARFSVQINSHIVHRSDSKFQIFAYRGKVPVVVSFQPARGALQPGILSIASHASLPNIWTAWQAITPLVEELNALLQEWPSLYYTVHVLCSKCLKRGSPNPHPFPGELLSQPRPDGVTELICPKNGSERLNVSLVYPPTPTMISPCSK</sequence>
<feature type="chain" id="PRO_0000308611" description="Malignant fibrous histiocytoma-amplified sequence 1 homolog">
    <location>
        <begin position="1"/>
        <end position="997"/>
    </location>
</feature>
<feature type="repeat" description="LRR 1">
    <location>
        <begin position="32"/>
        <end position="53"/>
    </location>
</feature>
<feature type="repeat" description="LRR 2">
    <location>
        <begin position="54"/>
        <end position="76"/>
    </location>
</feature>
<feature type="repeat" description="LRR 3">
    <location>
        <begin position="79"/>
        <end position="100"/>
    </location>
</feature>
<feature type="repeat" description="LRR 4">
    <location>
        <begin position="102"/>
        <end position="123"/>
    </location>
</feature>
<feature type="repeat" description="LRR 5">
    <location>
        <begin position="125"/>
        <end position="146"/>
    </location>
</feature>
<feature type="repeat" description="LRR 6">
    <location>
        <begin position="148"/>
        <end position="170"/>
    </location>
</feature>
<feature type="repeat" description="LRR 7">
    <location>
        <begin position="171"/>
        <end position="192"/>
    </location>
</feature>
<feature type="repeat" description="LRR 8">
    <location>
        <begin position="194"/>
        <end position="216"/>
    </location>
</feature>
<feature type="repeat" description="LRR 9">
    <location>
        <begin position="218"/>
        <end position="239"/>
    </location>
</feature>
<feature type="repeat" description="LRR 10">
    <location>
        <begin position="241"/>
        <end position="262"/>
    </location>
</feature>
<feature type="repeat" description="LRR 11">
    <location>
        <begin position="264"/>
        <end position="286"/>
    </location>
</feature>
<feature type="repeat" description="LRR 12">
    <location>
        <begin position="287"/>
        <end position="308"/>
    </location>
</feature>
<feature type="repeat" description="LRR 13">
    <location>
        <begin position="310"/>
        <end position="331"/>
    </location>
</feature>
<feature type="repeat" description="LRR 14">
    <location>
        <begin position="333"/>
        <end position="354"/>
    </location>
</feature>
<feature type="domain" description="Roc" evidence="3">
    <location>
        <begin position="393"/>
        <end position="626"/>
    </location>
</feature>
<feature type="domain" description="COR" evidence="2">
    <location>
        <begin position="637"/>
        <end position="861"/>
    </location>
</feature>
<accession>A4IIK1</accession>
<keyword id="KW-0963">Cytoplasm</keyword>
<keyword id="KW-0342">GTP-binding</keyword>
<keyword id="KW-0391">Immunity</keyword>
<keyword id="KW-0395">Inflammatory response</keyword>
<keyword id="KW-0399">Innate immunity</keyword>
<keyword id="KW-0433">Leucine-rich repeat</keyword>
<keyword id="KW-0547">Nucleotide-binding</keyword>
<keyword id="KW-1185">Reference proteome</keyword>
<keyword id="KW-0677">Repeat</keyword>
<reference key="1">
    <citation type="submission" date="2007-03" db="EMBL/GenBank/DDBJ databases">
        <authorList>
            <consortium name="NIH - Xenopus Gene Collection (XGC) project"/>
        </authorList>
    </citation>
    <scope>NUCLEOTIDE SEQUENCE [LARGE SCALE MRNA]</scope>
    <source>
        <tissue>Brain</tissue>
    </source>
</reference>
<gene>
    <name type="primary">mfhas1</name>
</gene>
<comment type="function">
    <text evidence="1">Probable GTP-binding protein. Functions in innate immunity and more specifically the inflammatory response as a regulator of the Toll-like receptor TLR2 and TLR4 signaling pathways.</text>
</comment>
<comment type="subcellular location">
    <subcellularLocation>
        <location evidence="1">Cytoplasm</location>
    </subcellularLocation>
</comment>
<protein>
    <recommendedName>
        <fullName evidence="4">Malignant fibrous histiocytoma-amplified sequence 1 homolog</fullName>
    </recommendedName>
</protein>
<evidence type="ECO:0000250" key="1">
    <source>
        <dbReference type="UniProtKB" id="Q9Y4C4"/>
    </source>
</evidence>
<evidence type="ECO:0000255" key="2"/>
<evidence type="ECO:0000255" key="3">
    <source>
        <dbReference type="PROSITE-ProRule" id="PRU00758"/>
    </source>
</evidence>
<evidence type="ECO:0000305" key="4"/>
<dbReference type="EMBL" id="BC136050">
    <property type="protein sequence ID" value="AAI36051.1"/>
    <property type="molecule type" value="mRNA"/>
</dbReference>
<dbReference type="RefSeq" id="NP_001096407.1">
    <property type="nucleotide sequence ID" value="NM_001102937.1"/>
</dbReference>
<dbReference type="SMR" id="A4IIK1"/>
<dbReference type="FunCoup" id="A4IIK1">
    <property type="interactions" value="883"/>
</dbReference>
<dbReference type="STRING" id="8364.ENSXETP00000041437"/>
<dbReference type="PaxDb" id="8364-ENSXETP00000000786"/>
<dbReference type="GeneID" id="100125009"/>
<dbReference type="KEGG" id="xtr:100125009"/>
<dbReference type="AGR" id="Xenbase:XB-GENE-1003080"/>
<dbReference type="CTD" id="9258"/>
<dbReference type="Xenbase" id="XB-GENE-1003080">
    <property type="gene designation" value="mfhas1"/>
</dbReference>
<dbReference type="eggNOG" id="KOG0619">
    <property type="taxonomic scope" value="Eukaryota"/>
</dbReference>
<dbReference type="InParanoid" id="A4IIK1"/>
<dbReference type="OrthoDB" id="676979at2759"/>
<dbReference type="Proteomes" id="UP000008143">
    <property type="component" value="Chromosome 1"/>
</dbReference>
<dbReference type="GO" id="GO:0005737">
    <property type="term" value="C:cytoplasm"/>
    <property type="evidence" value="ECO:0007669"/>
    <property type="project" value="UniProtKB-SubCell"/>
</dbReference>
<dbReference type="GO" id="GO:0005525">
    <property type="term" value="F:GTP binding"/>
    <property type="evidence" value="ECO:0007669"/>
    <property type="project" value="UniProtKB-KW"/>
</dbReference>
<dbReference type="GO" id="GO:0006954">
    <property type="term" value="P:inflammatory response"/>
    <property type="evidence" value="ECO:0007669"/>
    <property type="project" value="UniProtKB-KW"/>
</dbReference>
<dbReference type="GO" id="GO:0045087">
    <property type="term" value="P:innate immune response"/>
    <property type="evidence" value="ECO:0007669"/>
    <property type="project" value="UniProtKB-KW"/>
</dbReference>
<dbReference type="GO" id="GO:0009966">
    <property type="term" value="P:regulation of signal transduction"/>
    <property type="evidence" value="ECO:0007669"/>
    <property type="project" value="UniProtKB-ARBA"/>
</dbReference>
<dbReference type="Gene3D" id="3.40.50.300">
    <property type="entry name" value="P-loop containing nucleotide triphosphate hydrolases"/>
    <property type="match status" value="1"/>
</dbReference>
<dbReference type="Gene3D" id="3.80.10.10">
    <property type="entry name" value="Ribonuclease Inhibitor"/>
    <property type="match status" value="2"/>
</dbReference>
<dbReference type="Gene3D" id="3.30.70.1390">
    <property type="entry name" value="ROC domain from the Parkinson's disease-associated leucine-rich repeat kinase 2"/>
    <property type="match status" value="1"/>
</dbReference>
<dbReference type="Gene3D" id="1.10.10.10">
    <property type="entry name" value="Winged helix-like DNA-binding domain superfamily/Winged helix DNA-binding domain"/>
    <property type="match status" value="1"/>
</dbReference>
<dbReference type="InterPro" id="IPR001611">
    <property type="entry name" value="Leu-rich_rpt"/>
</dbReference>
<dbReference type="InterPro" id="IPR003591">
    <property type="entry name" value="Leu-rich_rpt_typical-subtyp"/>
</dbReference>
<dbReference type="InterPro" id="IPR032675">
    <property type="entry name" value="LRR_dom_sf"/>
</dbReference>
<dbReference type="InterPro" id="IPR050216">
    <property type="entry name" value="LRR_domain-containing"/>
</dbReference>
<dbReference type="InterPro" id="IPR027417">
    <property type="entry name" value="P-loop_NTPase"/>
</dbReference>
<dbReference type="InterPro" id="IPR020859">
    <property type="entry name" value="ROC"/>
</dbReference>
<dbReference type="InterPro" id="IPR036388">
    <property type="entry name" value="WH-like_DNA-bd_sf"/>
</dbReference>
<dbReference type="PANTHER" id="PTHR48051">
    <property type="match status" value="1"/>
</dbReference>
<dbReference type="PANTHER" id="PTHR48051:SF48">
    <property type="entry name" value="MULTIFUNCTIONAL ROCO FAMILY SIGNALING REGULATOR 1"/>
    <property type="match status" value="1"/>
</dbReference>
<dbReference type="Pfam" id="PF00560">
    <property type="entry name" value="LRR_1"/>
    <property type="match status" value="1"/>
</dbReference>
<dbReference type="Pfam" id="PF13855">
    <property type="entry name" value="LRR_8"/>
    <property type="match status" value="2"/>
</dbReference>
<dbReference type="Pfam" id="PF08477">
    <property type="entry name" value="Roc"/>
    <property type="match status" value="1"/>
</dbReference>
<dbReference type="PRINTS" id="PR00019">
    <property type="entry name" value="LEURICHRPT"/>
</dbReference>
<dbReference type="SMART" id="SM00364">
    <property type="entry name" value="LRR_BAC"/>
    <property type="match status" value="10"/>
</dbReference>
<dbReference type="SMART" id="SM00369">
    <property type="entry name" value="LRR_TYP"/>
    <property type="match status" value="9"/>
</dbReference>
<dbReference type="SUPFAM" id="SSF52058">
    <property type="entry name" value="L domain-like"/>
    <property type="match status" value="1"/>
</dbReference>
<dbReference type="SUPFAM" id="SSF52540">
    <property type="entry name" value="P-loop containing nucleoside triphosphate hydrolases"/>
    <property type="match status" value="1"/>
</dbReference>
<dbReference type="SUPFAM" id="SSF82615">
    <property type="entry name" value="Polo-box domain"/>
    <property type="match status" value="1"/>
</dbReference>
<dbReference type="PROSITE" id="PS51450">
    <property type="entry name" value="LRR"/>
    <property type="match status" value="13"/>
</dbReference>
<dbReference type="PROSITE" id="PS51424">
    <property type="entry name" value="ROC"/>
    <property type="match status" value="1"/>
</dbReference>
<proteinExistence type="evidence at transcript level"/>